<reference key="1">
    <citation type="submission" date="1998-02" db="EMBL/GenBank/DDBJ databases">
        <title>Cloning and sequencing of the secY locus from Streptomyces coelicolor A3(2).</title>
        <authorList>
            <person name="Loriaux A."/>
            <person name="Brans A."/>
            <person name="Dusart J."/>
        </authorList>
    </citation>
    <scope>NUCLEOTIDE SEQUENCE [GENOMIC DNA]</scope>
    <source>
        <strain>A3(2) / NRRL B-16638</strain>
    </source>
</reference>
<reference key="2">
    <citation type="journal article" date="2002" name="Nature">
        <title>Complete genome sequence of the model actinomycete Streptomyces coelicolor A3(2).</title>
        <authorList>
            <person name="Bentley S.D."/>
            <person name="Chater K.F."/>
            <person name="Cerdeno-Tarraga A.-M."/>
            <person name="Challis G.L."/>
            <person name="Thomson N.R."/>
            <person name="James K.D."/>
            <person name="Harris D.E."/>
            <person name="Quail M.A."/>
            <person name="Kieser H."/>
            <person name="Harper D."/>
            <person name="Bateman A."/>
            <person name="Brown S."/>
            <person name="Chandra G."/>
            <person name="Chen C.W."/>
            <person name="Collins M."/>
            <person name="Cronin A."/>
            <person name="Fraser A."/>
            <person name="Goble A."/>
            <person name="Hidalgo J."/>
            <person name="Hornsby T."/>
            <person name="Howarth S."/>
            <person name="Huang C.-H."/>
            <person name="Kieser T."/>
            <person name="Larke L."/>
            <person name="Murphy L.D."/>
            <person name="Oliver K."/>
            <person name="O'Neil S."/>
            <person name="Rabbinowitsch E."/>
            <person name="Rajandream M.A."/>
            <person name="Rutherford K.M."/>
            <person name="Rutter S."/>
            <person name="Seeger K."/>
            <person name="Saunders D."/>
            <person name="Sharp S."/>
            <person name="Squares R."/>
            <person name="Squares S."/>
            <person name="Taylor K."/>
            <person name="Warren T."/>
            <person name="Wietzorrek A."/>
            <person name="Woodward J.R."/>
            <person name="Barrell B.G."/>
            <person name="Parkhill J."/>
            <person name="Hopwood D.A."/>
        </authorList>
    </citation>
    <scope>NUCLEOTIDE SEQUENCE [LARGE SCALE GENOMIC DNA]</scope>
    <source>
        <strain>ATCC BAA-471 / A3(2) / M145</strain>
    </source>
</reference>
<gene>
    <name evidence="1" type="primary">rplR</name>
    <name type="ordered locus">SCO4718</name>
    <name type="ORF">SCD31.43</name>
</gene>
<proteinExistence type="inferred from homology"/>
<feature type="chain" id="PRO_0000131355" description="Large ribosomal subunit protein uL18">
    <location>
        <begin position="1"/>
        <end position="127"/>
    </location>
</feature>
<feature type="sequence conflict" description="In Ref. 1; CAA58133." evidence="2" ref="1">
    <original>R</original>
    <variation>V</variation>
    <location>
        <position position="35"/>
    </location>
</feature>
<comment type="function">
    <text evidence="1">This is one of the proteins that bind and probably mediate the attachment of the 5S RNA into the large ribosomal subunit, where it forms part of the central protuberance.</text>
</comment>
<comment type="subunit">
    <text evidence="1">Part of the 50S ribosomal subunit; part of the 5S rRNA/L5/L18/L25 subcomplex. Contacts the 5S and 23S rRNAs.</text>
</comment>
<comment type="similarity">
    <text evidence="1">Belongs to the universal ribosomal protein uL18 family.</text>
</comment>
<accession>P46788</accession>
<accession>Q9L0C4</accession>
<keyword id="KW-1185">Reference proteome</keyword>
<keyword id="KW-0687">Ribonucleoprotein</keyword>
<keyword id="KW-0689">Ribosomal protein</keyword>
<keyword id="KW-0694">RNA-binding</keyword>
<keyword id="KW-0699">rRNA-binding</keyword>
<organism>
    <name type="scientific">Streptomyces coelicolor (strain ATCC BAA-471 / A3(2) / M145)</name>
    <dbReference type="NCBI Taxonomy" id="100226"/>
    <lineage>
        <taxon>Bacteria</taxon>
        <taxon>Bacillati</taxon>
        <taxon>Actinomycetota</taxon>
        <taxon>Actinomycetes</taxon>
        <taxon>Kitasatosporales</taxon>
        <taxon>Streptomycetaceae</taxon>
        <taxon>Streptomyces</taxon>
        <taxon>Streptomyces albidoflavus group</taxon>
    </lineage>
</organism>
<evidence type="ECO:0000255" key="1">
    <source>
        <dbReference type="HAMAP-Rule" id="MF_01337"/>
    </source>
</evidence>
<evidence type="ECO:0000305" key="2"/>
<protein>
    <recommendedName>
        <fullName evidence="1">Large ribosomal subunit protein uL18</fullName>
    </recommendedName>
    <alternativeName>
        <fullName evidence="2">50S ribosomal protein L18</fullName>
    </alternativeName>
</protein>
<name>RL18_STRCO</name>
<sequence length="127" mass="13579">MAYGQKILKGDAYKRAAIKRRHIRIRKNLSGTAERPRLVVTRSNRHIVAQVIDDIKGHTLASASTLDTSIRGGEADKSAQAKQVGALVAERAKAAGVEAVVFDRGGNQYAGRIAALADAAREAGLKF</sequence>
<dbReference type="EMBL" id="X83011">
    <property type="protein sequence ID" value="CAA58133.1"/>
    <property type="molecule type" value="Genomic_DNA"/>
</dbReference>
<dbReference type="EMBL" id="AL939121">
    <property type="protein sequence ID" value="CAB82086.1"/>
    <property type="molecule type" value="Genomic_DNA"/>
</dbReference>
<dbReference type="PIR" id="S50002">
    <property type="entry name" value="S50002"/>
</dbReference>
<dbReference type="RefSeq" id="NP_628877.1">
    <property type="nucleotide sequence ID" value="NC_003888.3"/>
</dbReference>
<dbReference type="RefSeq" id="WP_003974252.1">
    <property type="nucleotide sequence ID" value="NZ_VNID01000016.1"/>
</dbReference>
<dbReference type="SMR" id="P46788"/>
<dbReference type="FunCoup" id="P46788">
    <property type="interactions" value="254"/>
</dbReference>
<dbReference type="STRING" id="100226.gene:17762367"/>
<dbReference type="PaxDb" id="100226-SCO4718"/>
<dbReference type="GeneID" id="97462942"/>
<dbReference type="KEGG" id="sco:SCO4718"/>
<dbReference type="PATRIC" id="fig|100226.15.peg.4789"/>
<dbReference type="eggNOG" id="COG0256">
    <property type="taxonomic scope" value="Bacteria"/>
</dbReference>
<dbReference type="HOGENOM" id="CLU_098841_0_1_11"/>
<dbReference type="InParanoid" id="P46788"/>
<dbReference type="OrthoDB" id="9810939at2"/>
<dbReference type="PhylomeDB" id="P46788"/>
<dbReference type="Proteomes" id="UP000001973">
    <property type="component" value="Chromosome"/>
</dbReference>
<dbReference type="GO" id="GO:0022625">
    <property type="term" value="C:cytosolic large ribosomal subunit"/>
    <property type="evidence" value="ECO:0000318"/>
    <property type="project" value="GO_Central"/>
</dbReference>
<dbReference type="GO" id="GO:0008097">
    <property type="term" value="F:5S rRNA binding"/>
    <property type="evidence" value="ECO:0000318"/>
    <property type="project" value="GO_Central"/>
</dbReference>
<dbReference type="GO" id="GO:0003735">
    <property type="term" value="F:structural constituent of ribosome"/>
    <property type="evidence" value="ECO:0007669"/>
    <property type="project" value="InterPro"/>
</dbReference>
<dbReference type="GO" id="GO:0006412">
    <property type="term" value="P:translation"/>
    <property type="evidence" value="ECO:0007669"/>
    <property type="project" value="UniProtKB-UniRule"/>
</dbReference>
<dbReference type="CDD" id="cd00432">
    <property type="entry name" value="Ribosomal_L18_L5e"/>
    <property type="match status" value="1"/>
</dbReference>
<dbReference type="FunFam" id="3.30.420.100:FF:000001">
    <property type="entry name" value="50S ribosomal protein L18"/>
    <property type="match status" value="1"/>
</dbReference>
<dbReference type="Gene3D" id="3.30.420.100">
    <property type="match status" value="1"/>
</dbReference>
<dbReference type="HAMAP" id="MF_01337_B">
    <property type="entry name" value="Ribosomal_uL18_B"/>
    <property type="match status" value="1"/>
</dbReference>
<dbReference type="InterPro" id="IPR004389">
    <property type="entry name" value="Ribosomal_uL18_bac-type"/>
</dbReference>
<dbReference type="InterPro" id="IPR005484">
    <property type="entry name" value="Ribosomal_uL18_bac/euk"/>
</dbReference>
<dbReference type="NCBIfam" id="TIGR00060">
    <property type="entry name" value="L18_bact"/>
    <property type="match status" value="1"/>
</dbReference>
<dbReference type="PANTHER" id="PTHR12899">
    <property type="entry name" value="39S RIBOSOMAL PROTEIN L18, MITOCHONDRIAL"/>
    <property type="match status" value="1"/>
</dbReference>
<dbReference type="PANTHER" id="PTHR12899:SF3">
    <property type="entry name" value="LARGE RIBOSOMAL SUBUNIT PROTEIN UL18M"/>
    <property type="match status" value="1"/>
</dbReference>
<dbReference type="Pfam" id="PF00861">
    <property type="entry name" value="Ribosomal_L18p"/>
    <property type="match status" value="1"/>
</dbReference>
<dbReference type="SUPFAM" id="SSF53137">
    <property type="entry name" value="Translational machinery components"/>
    <property type="match status" value="1"/>
</dbReference>